<keyword id="KW-0067">ATP-binding</keyword>
<keyword id="KW-0436">Ligase</keyword>
<keyword id="KW-0460">Magnesium</keyword>
<keyword id="KW-0547">Nucleotide-binding</keyword>
<keyword id="KW-0587">Phenylpropanoid metabolism</keyword>
<keyword id="KW-1185">Reference proteome</keyword>
<dbReference type="EC" id="6.2.1.12" evidence="1"/>
<dbReference type="EMBL" id="AAFI02000071">
    <property type="protein sequence ID" value="EAL65024.2"/>
    <property type="molecule type" value="Genomic_DNA"/>
</dbReference>
<dbReference type="RefSeq" id="XP_638379.2">
    <property type="nucleotide sequence ID" value="XM_633287.2"/>
</dbReference>
<dbReference type="SMR" id="Q54P79"/>
<dbReference type="FunCoup" id="Q54P79">
    <property type="interactions" value="106"/>
</dbReference>
<dbReference type="STRING" id="44689.Q54P79"/>
<dbReference type="PaxDb" id="44689-DDB0266358"/>
<dbReference type="EnsemblProtists" id="EAL65024">
    <property type="protein sequence ID" value="EAL65024"/>
    <property type="gene ID" value="DDB_G0284743"/>
</dbReference>
<dbReference type="GeneID" id="8624748"/>
<dbReference type="KEGG" id="ddi:DDB_G0284743"/>
<dbReference type="dictyBase" id="DDB_G0284743">
    <property type="gene designation" value="4cl3"/>
</dbReference>
<dbReference type="VEuPathDB" id="AmoebaDB:DDB_G0284743"/>
<dbReference type="eggNOG" id="KOG1176">
    <property type="taxonomic scope" value="Eukaryota"/>
</dbReference>
<dbReference type="HOGENOM" id="CLU_000022_59_2_1"/>
<dbReference type="InParanoid" id="Q54P79"/>
<dbReference type="OMA" id="RVAAYKY"/>
<dbReference type="PhylomeDB" id="Q54P79"/>
<dbReference type="UniPathway" id="UPA00372">
    <property type="reaction ID" value="UER00547"/>
</dbReference>
<dbReference type="PRO" id="PR:Q54P79"/>
<dbReference type="Proteomes" id="UP000002195">
    <property type="component" value="Chromosome 4"/>
</dbReference>
<dbReference type="GO" id="GO:0016207">
    <property type="term" value="F:4-coumarate-CoA ligase activity"/>
    <property type="evidence" value="ECO:0007669"/>
    <property type="project" value="UniProtKB-EC"/>
</dbReference>
<dbReference type="GO" id="GO:0005524">
    <property type="term" value="F:ATP binding"/>
    <property type="evidence" value="ECO:0007669"/>
    <property type="project" value="UniProtKB-KW"/>
</dbReference>
<dbReference type="GO" id="GO:0016405">
    <property type="term" value="F:CoA-ligase activity"/>
    <property type="evidence" value="ECO:0000318"/>
    <property type="project" value="GO_Central"/>
</dbReference>
<dbReference type="GO" id="GO:0009698">
    <property type="term" value="P:phenylpropanoid metabolic process"/>
    <property type="evidence" value="ECO:0007669"/>
    <property type="project" value="UniProtKB-KW"/>
</dbReference>
<dbReference type="CDD" id="cd05911">
    <property type="entry name" value="Firefly_Luc_like"/>
    <property type="match status" value="1"/>
</dbReference>
<dbReference type="FunFam" id="3.30.300.30:FF:000007">
    <property type="entry name" value="4-coumarate--CoA ligase 2"/>
    <property type="match status" value="1"/>
</dbReference>
<dbReference type="FunFam" id="3.40.50.12780:FF:000003">
    <property type="entry name" value="Long-chain-fatty-acid--CoA ligase FadD"/>
    <property type="match status" value="1"/>
</dbReference>
<dbReference type="Gene3D" id="3.30.300.30">
    <property type="match status" value="1"/>
</dbReference>
<dbReference type="Gene3D" id="3.40.50.980">
    <property type="match status" value="2"/>
</dbReference>
<dbReference type="Gene3D" id="2.30.38.10">
    <property type="entry name" value="Luciferase, Domain 3"/>
    <property type="match status" value="1"/>
</dbReference>
<dbReference type="InterPro" id="IPR025110">
    <property type="entry name" value="AMP-bd_C"/>
</dbReference>
<dbReference type="InterPro" id="IPR045851">
    <property type="entry name" value="AMP-bd_C_sf"/>
</dbReference>
<dbReference type="InterPro" id="IPR000873">
    <property type="entry name" value="AMP-dep_synth/lig_dom"/>
</dbReference>
<dbReference type="PANTHER" id="PTHR24096:SF149">
    <property type="entry name" value="AMP-BINDING DOMAIN-CONTAINING PROTEIN-RELATED"/>
    <property type="match status" value="1"/>
</dbReference>
<dbReference type="PANTHER" id="PTHR24096">
    <property type="entry name" value="LONG-CHAIN-FATTY-ACID--COA LIGASE"/>
    <property type="match status" value="1"/>
</dbReference>
<dbReference type="Pfam" id="PF00501">
    <property type="entry name" value="AMP-binding"/>
    <property type="match status" value="1"/>
</dbReference>
<dbReference type="Pfam" id="PF13193">
    <property type="entry name" value="AMP-binding_C"/>
    <property type="match status" value="1"/>
</dbReference>
<dbReference type="SUPFAM" id="SSF56801">
    <property type="entry name" value="Acetyl-CoA synthetase-like"/>
    <property type="match status" value="1"/>
</dbReference>
<proteinExistence type="inferred from homology"/>
<feature type="chain" id="PRO_0000327703" description="Probable 4-coumarate--CoA ligase 3">
    <location>
        <begin position="1"/>
        <end position="551"/>
    </location>
</feature>
<feature type="region of interest" description="SBD1" evidence="2">
    <location>
        <begin position="276"/>
        <end position="346"/>
    </location>
</feature>
<feature type="region of interest" description="SBD2" evidence="2">
    <location>
        <begin position="347"/>
        <end position="409"/>
    </location>
</feature>
<feature type="binding site" evidence="1">
    <location>
        <position position="205"/>
    </location>
    <ligand>
        <name>ATP</name>
        <dbReference type="ChEBI" id="CHEBI:30616"/>
    </ligand>
</feature>
<feature type="binding site" evidence="1">
    <location>
        <position position="206"/>
    </location>
    <ligand>
        <name>ATP</name>
        <dbReference type="ChEBI" id="CHEBI:30616"/>
    </ligand>
</feature>
<feature type="binding site" evidence="1">
    <location>
        <position position="207"/>
    </location>
    <ligand>
        <name>ATP</name>
        <dbReference type="ChEBI" id="CHEBI:30616"/>
    </ligand>
</feature>
<feature type="binding site" evidence="1">
    <location>
        <position position="208"/>
    </location>
    <ligand>
        <name>ATP</name>
        <dbReference type="ChEBI" id="CHEBI:30616"/>
    </ligand>
</feature>
<feature type="binding site" evidence="1">
    <location>
        <position position="209"/>
    </location>
    <ligand>
        <name>ATP</name>
        <dbReference type="ChEBI" id="CHEBI:30616"/>
    </ligand>
</feature>
<feature type="binding site" evidence="1">
    <location>
        <position position="213"/>
    </location>
    <ligand>
        <name>ATP</name>
        <dbReference type="ChEBI" id="CHEBI:30616"/>
    </ligand>
</feature>
<feature type="binding site" evidence="1">
    <location>
        <position position="253"/>
    </location>
    <ligand>
        <name>(E)-4-coumaroyl-AMP</name>
        <dbReference type="ChEBI" id="CHEBI:192348"/>
    </ligand>
</feature>
<feature type="binding site" evidence="1">
    <location>
        <position position="274"/>
    </location>
    <ligand>
        <name>CoA</name>
        <dbReference type="ChEBI" id="CHEBI:57287"/>
    </ligand>
</feature>
<feature type="binding site" evidence="1">
    <location>
        <position position="323"/>
    </location>
    <ligand>
        <name>(E)-4-coumaroyl-AMP</name>
        <dbReference type="ChEBI" id="CHEBI:192348"/>
    </ligand>
</feature>
<feature type="binding site" evidence="1">
    <location>
        <position position="346"/>
    </location>
    <ligand>
        <name>(E)-4-coumaroyl-AMP</name>
        <dbReference type="ChEBI" id="CHEBI:192348"/>
    </ligand>
</feature>
<feature type="binding site" evidence="1">
    <location>
        <position position="346"/>
    </location>
    <ligand>
        <name>ATP</name>
        <dbReference type="ChEBI" id="CHEBI:30616"/>
    </ligand>
</feature>
<feature type="binding site" evidence="1">
    <location>
        <position position="347"/>
    </location>
    <ligand>
        <name>(E)-4-coumaroyl-AMP</name>
        <dbReference type="ChEBI" id="CHEBI:192348"/>
    </ligand>
</feature>
<feature type="binding site" evidence="1">
    <location>
        <position position="347"/>
    </location>
    <ligand>
        <name>ATP</name>
        <dbReference type="ChEBI" id="CHEBI:30616"/>
    </ligand>
</feature>
<feature type="binding site" evidence="1">
    <location>
        <position position="351"/>
    </location>
    <ligand>
        <name>(E)-4-coumaroyl-AMP</name>
        <dbReference type="ChEBI" id="CHEBI:192348"/>
    </ligand>
</feature>
<feature type="binding site" evidence="1">
    <location>
        <position position="351"/>
    </location>
    <ligand>
        <name>ATP</name>
        <dbReference type="ChEBI" id="CHEBI:30616"/>
    </ligand>
</feature>
<feature type="binding site" evidence="1">
    <location>
        <position position="430"/>
    </location>
    <ligand>
        <name>ATP</name>
        <dbReference type="ChEBI" id="CHEBI:30616"/>
    </ligand>
</feature>
<feature type="binding site" evidence="1">
    <location>
        <position position="445"/>
    </location>
    <ligand>
        <name>ATP</name>
        <dbReference type="ChEBI" id="CHEBI:30616"/>
    </ligand>
</feature>
<feature type="binding site" evidence="1">
    <location>
        <position position="447"/>
    </location>
    <ligand>
        <name>(E)-4-coumaroyl-AMP</name>
        <dbReference type="ChEBI" id="CHEBI:192348"/>
    </ligand>
</feature>
<feature type="binding site" evidence="1">
    <location>
        <position position="451"/>
    </location>
    <ligand>
        <name>(E)-4-coumaroyl-AMP</name>
        <dbReference type="ChEBI" id="CHEBI:192348"/>
    </ligand>
</feature>
<feature type="binding site" evidence="1">
    <location>
        <position position="453"/>
    </location>
    <ligand>
        <name>CoA</name>
        <dbReference type="ChEBI" id="CHEBI:57287"/>
    </ligand>
</feature>
<feature type="binding site" evidence="1">
    <location>
        <position position="454"/>
    </location>
    <ligand>
        <name>CoA</name>
        <dbReference type="ChEBI" id="CHEBI:57287"/>
    </ligand>
</feature>
<feature type="binding site" evidence="1">
    <location>
        <position position="537"/>
    </location>
    <ligand>
        <name>ATP</name>
        <dbReference type="ChEBI" id="CHEBI:30616"/>
    </ligand>
</feature>
<protein>
    <recommendedName>
        <fullName>Probable 4-coumarate--CoA ligase 3</fullName>
        <shortName>4CL 3</shortName>
        <ecNumber evidence="1">6.2.1.12</ecNumber>
    </recommendedName>
    <alternativeName>
        <fullName>4-coumaroyl-CoA synthase 3</fullName>
    </alternativeName>
</protein>
<comment type="function">
    <text evidence="1">Carboxylate--CoA ligase that may use 4-coumarate as substrate. Follows a two-step reaction mechanism, wherein the carboxylate substrate first undergoes adenylation by ATP, followed by a thioesterification in the presence of CoA to yield the final CoA thioester.</text>
</comment>
<comment type="catalytic activity">
    <reaction evidence="1">
        <text>(E)-4-coumarate + ATP + CoA = (E)-4-coumaroyl-CoA + AMP + diphosphate</text>
        <dbReference type="Rhea" id="RHEA:19641"/>
        <dbReference type="ChEBI" id="CHEBI:12876"/>
        <dbReference type="ChEBI" id="CHEBI:30616"/>
        <dbReference type="ChEBI" id="CHEBI:33019"/>
        <dbReference type="ChEBI" id="CHEBI:57287"/>
        <dbReference type="ChEBI" id="CHEBI:85008"/>
        <dbReference type="ChEBI" id="CHEBI:456215"/>
        <dbReference type="EC" id="6.2.1.12"/>
    </reaction>
    <physiologicalReaction direction="left-to-right" evidence="1">
        <dbReference type="Rhea" id="RHEA:19642"/>
    </physiologicalReaction>
</comment>
<comment type="catalytic activity">
    <reaction evidence="1">
        <text>(E)-4-coumarate + ATP + H(+) = (E)-4-coumaroyl-AMP + diphosphate</text>
        <dbReference type="Rhea" id="RHEA:72419"/>
        <dbReference type="ChEBI" id="CHEBI:12876"/>
        <dbReference type="ChEBI" id="CHEBI:15378"/>
        <dbReference type="ChEBI" id="CHEBI:30616"/>
        <dbReference type="ChEBI" id="CHEBI:33019"/>
        <dbReference type="ChEBI" id="CHEBI:192348"/>
    </reaction>
    <physiologicalReaction direction="left-to-right" evidence="1">
        <dbReference type="Rhea" id="RHEA:72420"/>
    </physiologicalReaction>
</comment>
<comment type="catalytic activity">
    <reaction evidence="1">
        <text>(E)-4-coumaroyl-AMP + CoA = (E)-4-coumaroyl-CoA + AMP + H(+)</text>
        <dbReference type="Rhea" id="RHEA:72423"/>
        <dbReference type="ChEBI" id="CHEBI:15378"/>
        <dbReference type="ChEBI" id="CHEBI:57287"/>
        <dbReference type="ChEBI" id="CHEBI:85008"/>
        <dbReference type="ChEBI" id="CHEBI:192348"/>
        <dbReference type="ChEBI" id="CHEBI:456215"/>
    </reaction>
    <physiologicalReaction direction="left-to-right" evidence="1">
        <dbReference type="Rhea" id="RHEA:72424"/>
    </physiologicalReaction>
</comment>
<comment type="cofactor">
    <cofactor evidence="1">
        <name>Mg(2+)</name>
        <dbReference type="ChEBI" id="CHEBI:18420"/>
    </cofactor>
</comment>
<comment type="pathway">
    <text evidence="2">Phytoalexin biosynthesis; 3,4',5-trihydroxystilbene biosynthesis; 3,4',5-trihydroxystilbene from trans-4-coumarate: step 1/2.</text>
</comment>
<comment type="domain">
    <text evidence="2">Both substrate-binding domains (SBD1 and SBD2) are involved in the substrate recognition, and are sufficient to confer the substrate specificity.</text>
</comment>
<comment type="similarity">
    <text evidence="3">Belongs to the ATP-dependent AMP-binding enzyme family.</text>
</comment>
<sequence length="551" mass="61163">MIRIINGQTYFTSKYPNIIIPEKPIPHLILKHIRYKPDQVLLVDGLTFKEYSSHFVADTIEKVACGLNKLNIKKGDVLGVILPNLPEYVPIFHGTLLMGGITSLVNPDYTIEELSHTLATVSPRYLAVTLAVYEKIKNDLKRVFPSVEKVILVDIAGQTLKEIDQLTLSSDGIVMSFNQLTNNNGKDYPIVRIDLTKDTAIIPFSSGTTGLFKGVCLSHYNLVSNTYQTQTIETSTYKKNDSVIGVLPFFHSFGLMLHIMLMVKQGYRIVTLPKFEPVRFLELIKKYKVAMSFIVPPIAIMFAKSPIVDKFDLSSLRTLFCGAAPLGSEIEDLIKERFKGRLVIKQGYGATELSPCCFVTPNGLVKSGSSGTLLPNLLAKIISSETGENLGMGEKGEICIKGPNVMLGYYNNEKATNEVIDKDGFLKTGDIGYVDEDGYFFIIDRSKELIKCKGFQVPPAELEALLLSHPKVADACVVGLSKGDMGEVPRGFVVIKQNESLTEKELLDWAHPKIANYKHFRGGIFFIPAIPKSATGKLLRKNLKDFNNLKL</sequence>
<organism>
    <name type="scientific">Dictyostelium discoideum</name>
    <name type="common">Social amoeba</name>
    <dbReference type="NCBI Taxonomy" id="44689"/>
    <lineage>
        <taxon>Eukaryota</taxon>
        <taxon>Amoebozoa</taxon>
        <taxon>Evosea</taxon>
        <taxon>Eumycetozoa</taxon>
        <taxon>Dictyostelia</taxon>
        <taxon>Dictyosteliales</taxon>
        <taxon>Dictyosteliaceae</taxon>
        <taxon>Dictyostelium</taxon>
    </lineage>
</organism>
<reference key="1">
    <citation type="journal article" date="2005" name="Nature">
        <title>The genome of the social amoeba Dictyostelium discoideum.</title>
        <authorList>
            <person name="Eichinger L."/>
            <person name="Pachebat J.A."/>
            <person name="Gloeckner G."/>
            <person name="Rajandream M.A."/>
            <person name="Sucgang R."/>
            <person name="Berriman M."/>
            <person name="Song J."/>
            <person name="Olsen R."/>
            <person name="Szafranski K."/>
            <person name="Xu Q."/>
            <person name="Tunggal B."/>
            <person name="Kummerfeld S."/>
            <person name="Madera M."/>
            <person name="Konfortov B.A."/>
            <person name="Rivero F."/>
            <person name="Bankier A.T."/>
            <person name="Lehmann R."/>
            <person name="Hamlin N."/>
            <person name="Davies R."/>
            <person name="Gaudet P."/>
            <person name="Fey P."/>
            <person name="Pilcher K."/>
            <person name="Chen G."/>
            <person name="Saunders D."/>
            <person name="Sodergren E.J."/>
            <person name="Davis P."/>
            <person name="Kerhornou A."/>
            <person name="Nie X."/>
            <person name="Hall N."/>
            <person name="Anjard C."/>
            <person name="Hemphill L."/>
            <person name="Bason N."/>
            <person name="Farbrother P."/>
            <person name="Desany B."/>
            <person name="Just E."/>
            <person name="Morio T."/>
            <person name="Rost R."/>
            <person name="Churcher C.M."/>
            <person name="Cooper J."/>
            <person name="Haydock S."/>
            <person name="van Driessche N."/>
            <person name="Cronin A."/>
            <person name="Goodhead I."/>
            <person name="Muzny D.M."/>
            <person name="Mourier T."/>
            <person name="Pain A."/>
            <person name="Lu M."/>
            <person name="Harper D."/>
            <person name="Lindsay R."/>
            <person name="Hauser H."/>
            <person name="James K.D."/>
            <person name="Quiles M."/>
            <person name="Madan Babu M."/>
            <person name="Saito T."/>
            <person name="Buchrieser C."/>
            <person name="Wardroper A."/>
            <person name="Felder M."/>
            <person name="Thangavelu M."/>
            <person name="Johnson D."/>
            <person name="Knights A."/>
            <person name="Loulseged H."/>
            <person name="Mungall K.L."/>
            <person name="Oliver K."/>
            <person name="Price C."/>
            <person name="Quail M.A."/>
            <person name="Urushihara H."/>
            <person name="Hernandez J."/>
            <person name="Rabbinowitsch E."/>
            <person name="Steffen D."/>
            <person name="Sanders M."/>
            <person name="Ma J."/>
            <person name="Kohara Y."/>
            <person name="Sharp S."/>
            <person name="Simmonds M.N."/>
            <person name="Spiegler S."/>
            <person name="Tivey A."/>
            <person name="Sugano S."/>
            <person name="White B."/>
            <person name="Walker D."/>
            <person name="Woodward J.R."/>
            <person name="Winckler T."/>
            <person name="Tanaka Y."/>
            <person name="Shaulsky G."/>
            <person name="Schleicher M."/>
            <person name="Weinstock G.M."/>
            <person name="Rosenthal A."/>
            <person name="Cox E.C."/>
            <person name="Chisholm R.L."/>
            <person name="Gibbs R.A."/>
            <person name="Loomis W.F."/>
            <person name="Platzer M."/>
            <person name="Kay R.R."/>
            <person name="Williams J.G."/>
            <person name="Dear P.H."/>
            <person name="Noegel A.A."/>
            <person name="Barrell B.G."/>
            <person name="Kuspa A."/>
        </authorList>
    </citation>
    <scope>NUCLEOTIDE SEQUENCE [LARGE SCALE GENOMIC DNA]</scope>
    <source>
        <strain>AX4</strain>
    </source>
</reference>
<accession>Q54P79</accession>
<evidence type="ECO:0000250" key="1">
    <source>
        <dbReference type="UniProtKB" id="O24146"/>
    </source>
</evidence>
<evidence type="ECO:0000250" key="2">
    <source>
        <dbReference type="UniProtKB" id="Q42524"/>
    </source>
</evidence>
<evidence type="ECO:0000305" key="3"/>
<gene>
    <name type="primary">4cl3</name>
    <name type="ORF">DDB_G0284743</name>
</gene>
<name>4CL3_DICDI</name>